<comment type="function">
    <text evidence="1 7">May be a transcription factor that may be involved in hematopoiesis, oncogenesis, and immune responses (By similarity). Plays a role in postnatal myogenesis, may be involved in the regulation of satellite cells self-renewal (PubMed:27446912).</text>
</comment>
<comment type="subunit">
    <text>Can homodimerize. Binds to DNA.</text>
</comment>
<comment type="subcellular location">
    <subcellularLocation>
        <location evidence="11">Nucleus</location>
    </subcellularLocation>
</comment>
<comment type="alternative products">
    <event type="alternative splicing"/>
    <isoform>
        <id>Q8K0L9-1</id>
        <name>1</name>
        <name>HOF-L</name>
        <sequence type="displayed"/>
    </isoform>
    <isoform>
        <id>Q8K0L9-2</id>
        <name>2</name>
        <name>HOF-S</name>
        <sequence type="described" ref="VSP_032504"/>
    </isoform>
</comment>
<comment type="tissue specificity">
    <text evidence="5 7">Specifically expressed in early hippocampal neurons, cerebellar granule cells and gliogenic progenitors as well as in differentiated glia (PubMed:11744704). Expressed in adult and aged myogenic satellite cells (PubMed:27446912).</text>
</comment>
<comment type="developmental stage">
    <text evidence="7">Not expressed during development, is induced during establishment of satellite cells and acquisition of quiescence.</text>
</comment>
<comment type="PTM">
    <text evidence="6">Sumoylated with SUMO1.</text>
</comment>
<organism>
    <name type="scientific">Mus musculus</name>
    <name type="common">Mouse</name>
    <dbReference type="NCBI Taxonomy" id="10090"/>
    <lineage>
        <taxon>Eukaryota</taxon>
        <taxon>Metazoa</taxon>
        <taxon>Chordata</taxon>
        <taxon>Craniata</taxon>
        <taxon>Vertebrata</taxon>
        <taxon>Euteleostomi</taxon>
        <taxon>Mammalia</taxon>
        <taxon>Eutheria</taxon>
        <taxon>Euarchontoglires</taxon>
        <taxon>Glires</taxon>
        <taxon>Rodentia</taxon>
        <taxon>Myomorpha</taxon>
        <taxon>Muroidea</taxon>
        <taxon>Muridae</taxon>
        <taxon>Murinae</taxon>
        <taxon>Mus</taxon>
        <taxon>Mus</taxon>
    </lineage>
</organism>
<sequence>MLERKKPKTAENQKASEENEITQPGGSSAKPALPCLNFEAVLSPAPALIHSTHSLTNSHAHTGSSDCDISCKGMTERIHSINLHNFSNSVLETLNEQRNRGHFCDVTVRIHGSMLRAHRCVLAAGSPFFQDKLLLGYSDIEIPSVVSVQSVQKLIDFMYSGVLRVSQSEALQILTAASILQIKTVIDECTRIVSQNVGDVFPGIQDSGQDTPRGTPESGTSGQSSDTESGYLQSHPQHSVDRIYSALYACSMQNGSGERSFYSGAVVSHHETALGLPRDHHMEDPSWITRIHERSQQMERYLSTTPETTHCRKQPRPVRIQTLVGNIHIKQEMEDDYDYYGQQRVQILERNESEECTEDTDQAEGTESEPKGESFDSGVSSSIGTEPDSVEQQFGAAAPRDGQAEPAQPEQAAEAPAESSAQPNQLEPGASSPERSNESEMDNTVITVSNSSDKGVLQQPSVNTSIGQPLPSTQLYLRQTETLTSNLRMPLTLTSNTQVIGTAGNTYLPALFTTQPAGSGPKPFLFSLPQPLTGQQTQFVTVSQPGLSTFTAQLPAPQPLASSAGHSTASGQGDKKPYECTLCNKTFTAKQNYVKHMFVHTGEKPHQCSICWRSFSLKDYLIKHMVTHTGVRAYQCSICNKRFTQKSSLNVHMRLHRGEKSYECYICKKKFSHKTLLERHVALHSASNGTPPAGTPPGARAGPPGVVACTEGTTYVCSVCPAKFDQIEQFNDHMRMHVSDG</sequence>
<dbReference type="EMBL" id="AF194030">
    <property type="protein sequence ID" value="AAF06015.1"/>
    <property type="molecule type" value="mRNA"/>
</dbReference>
<dbReference type="EMBL" id="AK005028">
    <property type="protein sequence ID" value="BAB23755.1"/>
    <property type="molecule type" value="mRNA"/>
</dbReference>
<dbReference type="EMBL" id="CT010512">
    <property type="status" value="NOT_ANNOTATED_CDS"/>
    <property type="molecule type" value="Genomic_DNA"/>
</dbReference>
<dbReference type="EMBL" id="BC031114">
    <property type="protein sequence ID" value="AAH31114.1"/>
    <property type="molecule type" value="mRNA"/>
</dbReference>
<dbReference type="EMBL" id="BC056446">
    <property type="protein sequence ID" value="AAH56446.1"/>
    <property type="molecule type" value="mRNA"/>
</dbReference>
<dbReference type="CCDS" id="CCDS28178.1">
    <molecule id="Q8K0L9-1"/>
</dbReference>
<dbReference type="CCDS" id="CCDS49851.1">
    <molecule id="Q8K0L9-2"/>
</dbReference>
<dbReference type="RefSeq" id="NP_001272734.1">
    <molecule id="Q8K0L9-1"/>
    <property type="nucleotide sequence ID" value="NM_001285805.1"/>
</dbReference>
<dbReference type="RefSeq" id="NP_001380326.1">
    <molecule id="Q8K0L9-1"/>
    <property type="nucleotide sequence ID" value="NM_001393397.1"/>
</dbReference>
<dbReference type="RefSeq" id="NP_001380327.1">
    <molecule id="Q8K0L9-1"/>
    <property type="nucleotide sequence ID" value="NM_001393398.1"/>
</dbReference>
<dbReference type="RefSeq" id="NP_001380328.1">
    <molecule id="Q8K0L9-2"/>
    <property type="nucleotide sequence ID" value="NM_001393399.1"/>
</dbReference>
<dbReference type="RefSeq" id="NP_062752.2">
    <molecule id="Q8K0L9-1"/>
    <property type="nucleotide sequence ID" value="NM_019778.2"/>
</dbReference>
<dbReference type="RefSeq" id="NP_851401.1">
    <molecule id="Q8K0L9-2"/>
    <property type="nucleotide sequence ID" value="NM_181058.1"/>
</dbReference>
<dbReference type="RefSeq" id="XP_006522475.1">
    <property type="nucleotide sequence ID" value="XM_006522412.3"/>
</dbReference>
<dbReference type="RefSeq" id="XP_006522476.1">
    <property type="nucleotide sequence ID" value="XM_006522413.3"/>
</dbReference>
<dbReference type="RefSeq" id="XP_006522477.1">
    <property type="nucleotide sequence ID" value="XM_006522414.2"/>
</dbReference>
<dbReference type="RefSeq" id="XP_006522478.1">
    <property type="nucleotide sequence ID" value="XM_006522415.3"/>
</dbReference>
<dbReference type="RefSeq" id="XP_006522479.1">
    <property type="nucleotide sequence ID" value="XM_006522416.3"/>
</dbReference>
<dbReference type="RefSeq" id="XP_006522481.1">
    <property type="nucleotide sequence ID" value="XM_006522418.3"/>
</dbReference>
<dbReference type="RefSeq" id="XP_006522485.1">
    <property type="nucleotide sequence ID" value="XM_006522422.3"/>
</dbReference>
<dbReference type="RefSeq" id="XP_006522487.1">
    <property type="nucleotide sequence ID" value="XM_006522424.3"/>
</dbReference>
<dbReference type="RefSeq" id="XP_011244291.1">
    <property type="nucleotide sequence ID" value="XM_011245989.2"/>
</dbReference>
<dbReference type="RefSeq" id="XP_011244292.1">
    <property type="nucleotide sequence ID" value="XM_011245990.2"/>
</dbReference>
<dbReference type="RefSeq" id="XP_017172580.1">
    <property type="nucleotide sequence ID" value="XM_017317091.1"/>
</dbReference>
<dbReference type="RefSeq" id="XP_017172581.1">
    <property type="nucleotide sequence ID" value="XM_017317092.1"/>
</dbReference>
<dbReference type="RefSeq" id="XP_017172582.1">
    <property type="nucleotide sequence ID" value="XM_017317093.1"/>
</dbReference>
<dbReference type="RefSeq" id="XP_017172583.1">
    <property type="nucleotide sequence ID" value="XM_017317094.1"/>
</dbReference>
<dbReference type="RefSeq" id="XP_017172584.1">
    <property type="nucleotide sequence ID" value="XM_017317095.1"/>
</dbReference>
<dbReference type="RefSeq" id="XP_017172585.1">
    <property type="nucleotide sequence ID" value="XM_017317096.1"/>
</dbReference>
<dbReference type="RefSeq" id="XP_017172586.1">
    <property type="nucleotide sequence ID" value="XM_017317097.1"/>
</dbReference>
<dbReference type="RefSeq" id="XP_017172587.1">
    <property type="nucleotide sequence ID" value="XM_017317098.1"/>
</dbReference>
<dbReference type="RefSeq" id="XP_017172588.1">
    <property type="nucleotide sequence ID" value="XM_017317099.1"/>
</dbReference>
<dbReference type="RefSeq" id="XP_017172589.1">
    <property type="nucleotide sequence ID" value="XM_017317100.1"/>
</dbReference>
<dbReference type="RefSeq" id="XP_017172590.1">
    <property type="nucleotide sequence ID" value="XM_017317101.1"/>
</dbReference>
<dbReference type="RefSeq" id="XP_017172591.1">
    <property type="nucleotide sequence ID" value="XM_017317102.1"/>
</dbReference>
<dbReference type="RefSeq" id="XP_017172592.1">
    <property type="nucleotide sequence ID" value="XM_017317103.1"/>
</dbReference>
<dbReference type="RefSeq" id="XP_017172593.1">
    <property type="nucleotide sequence ID" value="XM_017317104.1"/>
</dbReference>
<dbReference type="RefSeq" id="XP_017172594.1">
    <property type="nucleotide sequence ID" value="XM_017317105.1"/>
</dbReference>
<dbReference type="SMR" id="Q8K0L9"/>
<dbReference type="BioGRID" id="208015">
    <property type="interactions" value="19"/>
</dbReference>
<dbReference type="FunCoup" id="Q8K0L9">
    <property type="interactions" value="2685"/>
</dbReference>
<dbReference type="IntAct" id="Q8K0L9">
    <property type="interactions" value="2"/>
</dbReference>
<dbReference type="MINT" id="Q8K0L9"/>
<dbReference type="STRING" id="10090.ENSMUSP00000110342"/>
<dbReference type="GlyGen" id="Q8K0L9">
    <property type="glycosylation" value="7 sites, 1 O-linked glycan (6 sites)"/>
</dbReference>
<dbReference type="iPTMnet" id="Q8K0L9"/>
<dbReference type="PhosphoSitePlus" id="Q8K0L9"/>
<dbReference type="jPOST" id="Q8K0L9"/>
<dbReference type="PaxDb" id="10090-ENSMUSP00000110339"/>
<dbReference type="PeptideAtlas" id="Q8K0L9"/>
<dbReference type="ProteomicsDB" id="275122">
    <molecule id="Q8K0L9-1"/>
</dbReference>
<dbReference type="ProteomicsDB" id="275123">
    <molecule id="Q8K0L9-2"/>
</dbReference>
<dbReference type="Antibodypedia" id="16495">
    <property type="antibodies" value="153 antibodies from 25 providers"/>
</dbReference>
<dbReference type="DNASU" id="56490"/>
<dbReference type="Ensembl" id="ENSMUST00000079441.13">
    <molecule id="Q8K0L9-1"/>
    <property type="protein sequence ID" value="ENSMUSP00000078410.7"/>
    <property type="gene ID" value="ENSMUSG00000022708.17"/>
</dbReference>
<dbReference type="Ensembl" id="ENSMUST00000114690.8">
    <molecule id="Q8K0L9-2"/>
    <property type="protein sequence ID" value="ENSMUSP00000110338.2"/>
    <property type="gene ID" value="ENSMUSG00000022708.17"/>
</dbReference>
<dbReference type="Ensembl" id="ENSMUST00000114691.8">
    <molecule id="Q8K0L9-2"/>
    <property type="protein sequence ID" value="ENSMUSP00000110339.2"/>
    <property type="gene ID" value="ENSMUSG00000022708.17"/>
</dbReference>
<dbReference type="Ensembl" id="ENSMUST00000114694.9">
    <molecule id="Q8K0L9-1"/>
    <property type="protein sequence ID" value="ENSMUSP00000110342.3"/>
    <property type="gene ID" value="ENSMUSG00000022708.17"/>
</dbReference>
<dbReference type="Ensembl" id="ENSMUST00000114695.3">
    <molecule id="Q8K0L9-1"/>
    <property type="protein sequence ID" value="ENSMUSP00000110343.3"/>
    <property type="gene ID" value="ENSMUSG00000022708.17"/>
</dbReference>
<dbReference type="GeneID" id="56490"/>
<dbReference type="KEGG" id="mmu:56490"/>
<dbReference type="UCSC" id="uc007zga.3">
    <molecule id="Q8K0L9-1"/>
    <property type="organism name" value="mouse"/>
</dbReference>
<dbReference type="AGR" id="MGI:1929213"/>
<dbReference type="CTD" id="26137"/>
<dbReference type="MGI" id="MGI:1929213">
    <property type="gene designation" value="Zbtb20"/>
</dbReference>
<dbReference type="VEuPathDB" id="HostDB:ENSMUSG00000022708"/>
<dbReference type="eggNOG" id="KOG1721">
    <property type="taxonomic scope" value="Eukaryota"/>
</dbReference>
<dbReference type="GeneTree" id="ENSGT00940000158617"/>
<dbReference type="HOGENOM" id="CLU_019055_0_0_1"/>
<dbReference type="InParanoid" id="Q8K0L9"/>
<dbReference type="OMA" id="DEFSCYD"/>
<dbReference type="OrthoDB" id="6077919at2759"/>
<dbReference type="PhylomeDB" id="Q8K0L9"/>
<dbReference type="TreeFam" id="TF335684"/>
<dbReference type="BioGRID-ORCS" id="56490">
    <property type="hits" value="2 hits in 77 CRISPR screens"/>
</dbReference>
<dbReference type="ChiTaRS" id="Zbtb20">
    <property type="organism name" value="mouse"/>
</dbReference>
<dbReference type="PRO" id="PR:Q8K0L9"/>
<dbReference type="Proteomes" id="UP000000589">
    <property type="component" value="Chromosome 16"/>
</dbReference>
<dbReference type="RNAct" id="Q8K0L9">
    <property type="molecule type" value="protein"/>
</dbReference>
<dbReference type="Bgee" id="ENSMUSG00000022708">
    <property type="expression patterns" value="Expressed in rostral migratory stream and 259 other cell types or tissues"/>
</dbReference>
<dbReference type="ExpressionAtlas" id="Q8K0L9">
    <property type="expression patterns" value="baseline and differential"/>
</dbReference>
<dbReference type="GO" id="GO:0005737">
    <property type="term" value="C:cytoplasm"/>
    <property type="evidence" value="ECO:0000314"/>
    <property type="project" value="UniProtKB"/>
</dbReference>
<dbReference type="GO" id="GO:0016604">
    <property type="term" value="C:nuclear body"/>
    <property type="evidence" value="ECO:0007669"/>
    <property type="project" value="Ensembl"/>
</dbReference>
<dbReference type="GO" id="GO:0005634">
    <property type="term" value="C:nucleus"/>
    <property type="evidence" value="ECO:0000314"/>
    <property type="project" value="UniProtKB"/>
</dbReference>
<dbReference type="GO" id="GO:0003677">
    <property type="term" value="F:DNA binding"/>
    <property type="evidence" value="ECO:0000314"/>
    <property type="project" value="MGI"/>
</dbReference>
<dbReference type="GO" id="GO:0001227">
    <property type="term" value="F:DNA-binding transcription repressor activity, RNA polymerase II-specific"/>
    <property type="evidence" value="ECO:0000314"/>
    <property type="project" value="MGI"/>
</dbReference>
<dbReference type="GO" id="GO:0000976">
    <property type="term" value="F:transcription cis-regulatory region binding"/>
    <property type="evidence" value="ECO:0000314"/>
    <property type="project" value="UniProtKB"/>
</dbReference>
<dbReference type="GO" id="GO:0008270">
    <property type="term" value="F:zinc ion binding"/>
    <property type="evidence" value="ECO:0007669"/>
    <property type="project" value="UniProtKB-KW"/>
</dbReference>
<dbReference type="GO" id="GO:0071333">
    <property type="term" value="P:cellular response to glucose stimulus"/>
    <property type="evidence" value="ECO:0000315"/>
    <property type="project" value="UniProtKB"/>
</dbReference>
<dbReference type="GO" id="GO:0055088">
    <property type="term" value="P:lipid homeostasis"/>
    <property type="evidence" value="ECO:0000315"/>
    <property type="project" value="UniProtKB"/>
</dbReference>
<dbReference type="GO" id="GO:0045892">
    <property type="term" value="P:negative regulation of DNA-templated transcription"/>
    <property type="evidence" value="ECO:0000314"/>
    <property type="project" value="CACAO"/>
</dbReference>
<dbReference type="GO" id="GO:0010629">
    <property type="term" value="P:negative regulation of gene expression"/>
    <property type="evidence" value="ECO:0000315"/>
    <property type="project" value="CACAO"/>
</dbReference>
<dbReference type="GO" id="GO:0000122">
    <property type="term" value="P:negative regulation of transcription by RNA polymerase II"/>
    <property type="evidence" value="ECO:0000315"/>
    <property type="project" value="MGI"/>
</dbReference>
<dbReference type="GO" id="GO:0045821">
    <property type="term" value="P:positive regulation of glycolytic process"/>
    <property type="evidence" value="ECO:0000315"/>
    <property type="project" value="UniProtKB"/>
</dbReference>
<dbReference type="GO" id="GO:0032728">
    <property type="term" value="P:positive regulation of interferon-beta production"/>
    <property type="evidence" value="ECO:0000314"/>
    <property type="project" value="CACAO"/>
</dbReference>
<dbReference type="GO" id="GO:0032755">
    <property type="term" value="P:positive regulation of interleukin-6 production"/>
    <property type="evidence" value="ECO:0000314"/>
    <property type="project" value="CACAO"/>
</dbReference>
<dbReference type="GO" id="GO:0046889">
    <property type="term" value="P:positive regulation of lipid biosynthetic process"/>
    <property type="evidence" value="ECO:0000315"/>
    <property type="project" value="UniProtKB"/>
</dbReference>
<dbReference type="GO" id="GO:0032760">
    <property type="term" value="P:positive regulation of tumor necrosis factor production"/>
    <property type="evidence" value="ECO:0000314"/>
    <property type="project" value="CACAO"/>
</dbReference>
<dbReference type="CDD" id="cd18208">
    <property type="entry name" value="BTB_POZ_ZBTB20_DPZF"/>
    <property type="match status" value="1"/>
</dbReference>
<dbReference type="FunFam" id="3.30.710.10:FF:000039">
    <property type="entry name" value="Zinc finger and BTB domain containing 20"/>
    <property type="match status" value="1"/>
</dbReference>
<dbReference type="FunFam" id="3.30.160.60:FF:000304">
    <property type="entry name" value="Zinc finger and BTB domain-containing protein 20"/>
    <property type="match status" value="1"/>
</dbReference>
<dbReference type="FunFam" id="3.30.160.60:FF:000315">
    <property type="entry name" value="Zinc finger and BTB domain-containing protein 20"/>
    <property type="match status" value="1"/>
</dbReference>
<dbReference type="FunFam" id="3.30.160.60:FF:000426">
    <property type="entry name" value="Zinc finger and BTB domain-containing protein 20"/>
    <property type="match status" value="1"/>
</dbReference>
<dbReference type="FunFam" id="3.30.160.60:FF:000854">
    <property type="entry name" value="zinc finger and BTB domain-containing protein 20 isoform X1"/>
    <property type="match status" value="1"/>
</dbReference>
<dbReference type="Gene3D" id="3.30.160.60">
    <property type="entry name" value="Classic Zinc Finger"/>
    <property type="match status" value="4"/>
</dbReference>
<dbReference type="Gene3D" id="3.30.710.10">
    <property type="entry name" value="Potassium Channel Kv1.1, Chain A"/>
    <property type="match status" value="1"/>
</dbReference>
<dbReference type="InterPro" id="IPR000210">
    <property type="entry name" value="BTB/POZ_dom"/>
</dbReference>
<dbReference type="InterPro" id="IPR011333">
    <property type="entry name" value="SKP1/BTB/POZ_sf"/>
</dbReference>
<dbReference type="InterPro" id="IPR036236">
    <property type="entry name" value="Znf_C2H2_sf"/>
</dbReference>
<dbReference type="InterPro" id="IPR013087">
    <property type="entry name" value="Znf_C2H2_type"/>
</dbReference>
<dbReference type="InterPro" id="IPR050457">
    <property type="entry name" value="ZnFinger_BTB_dom_contain"/>
</dbReference>
<dbReference type="PANTHER" id="PTHR46105">
    <property type="entry name" value="AGAP004733-PA"/>
    <property type="match status" value="1"/>
</dbReference>
<dbReference type="PANTHER" id="PTHR46105:SF22">
    <property type="entry name" value="ZINC FINGER AND BTB DOMAIN CONTAINING 45"/>
    <property type="match status" value="1"/>
</dbReference>
<dbReference type="Pfam" id="PF00651">
    <property type="entry name" value="BTB"/>
    <property type="match status" value="1"/>
</dbReference>
<dbReference type="Pfam" id="PF00096">
    <property type="entry name" value="zf-C2H2"/>
    <property type="match status" value="5"/>
</dbReference>
<dbReference type="SMART" id="SM00225">
    <property type="entry name" value="BTB"/>
    <property type="match status" value="1"/>
</dbReference>
<dbReference type="SMART" id="SM00355">
    <property type="entry name" value="ZnF_C2H2"/>
    <property type="match status" value="5"/>
</dbReference>
<dbReference type="SUPFAM" id="SSF57667">
    <property type="entry name" value="beta-beta-alpha zinc fingers"/>
    <property type="match status" value="2"/>
</dbReference>
<dbReference type="SUPFAM" id="SSF54695">
    <property type="entry name" value="POZ domain"/>
    <property type="match status" value="1"/>
</dbReference>
<dbReference type="PROSITE" id="PS50097">
    <property type="entry name" value="BTB"/>
    <property type="match status" value="1"/>
</dbReference>
<dbReference type="PROSITE" id="PS00028">
    <property type="entry name" value="ZINC_FINGER_C2H2_1"/>
    <property type="match status" value="5"/>
</dbReference>
<dbReference type="PROSITE" id="PS50157">
    <property type="entry name" value="ZINC_FINGER_C2H2_2"/>
    <property type="match status" value="5"/>
</dbReference>
<evidence type="ECO:0000250" key="1">
    <source>
        <dbReference type="UniProtKB" id="Q9HC78"/>
    </source>
</evidence>
<evidence type="ECO:0000255" key="2">
    <source>
        <dbReference type="PROSITE-ProRule" id="PRU00037"/>
    </source>
</evidence>
<evidence type="ECO:0000255" key="3">
    <source>
        <dbReference type="PROSITE-ProRule" id="PRU00042"/>
    </source>
</evidence>
<evidence type="ECO:0000256" key="4">
    <source>
        <dbReference type="SAM" id="MobiDB-lite"/>
    </source>
</evidence>
<evidence type="ECO:0000269" key="5">
    <source>
    </source>
</evidence>
<evidence type="ECO:0000269" key="6">
    <source>
    </source>
</evidence>
<evidence type="ECO:0000269" key="7">
    <source>
    </source>
</evidence>
<evidence type="ECO:0000303" key="8">
    <source>
    </source>
</evidence>
<evidence type="ECO:0000303" key="9">
    <source>
    </source>
</evidence>
<evidence type="ECO:0000305" key="10"/>
<evidence type="ECO:0000305" key="11">
    <source>
    </source>
</evidence>
<evidence type="ECO:0007744" key="12">
    <source>
    </source>
</evidence>
<accession>Q8K0L9</accession>
<accession>A6X916</accession>
<accession>Q9DBD4</accession>
<accession>Q9QZ87</accession>
<proteinExistence type="evidence at protein level"/>
<reference key="1">
    <citation type="journal article" date="2002" name="J. Biol. Chem.">
        <title>Characterization of two novel nuclear BTB/POZ domain zinc finger isoforms. Association with differentiation of hippocampal neurons, cerebellar granule cells, and macroglia.</title>
        <authorList>
            <person name="Mitchelmore C."/>
            <person name="Kjaerulff K.M."/>
            <person name="Pedersen H.C."/>
            <person name="Nielsen J.V."/>
            <person name="Rasmussen T.E."/>
            <person name="Fisker M.F."/>
            <person name="Finsen B."/>
            <person name="Pedersen K.M."/>
            <person name="Jensen N.A."/>
        </authorList>
    </citation>
    <scope>NUCLEOTIDE SEQUENCE [MRNA] (ISOFORMS 1 AND 2)</scope>
    <scope>ALTERNATIVE SPLICING</scope>
    <scope>SUBCELLULAR LOCATION</scope>
    <scope>HOMODIMERIZATION</scope>
    <scope>TISSUE SPECIFICITY</scope>
    <source>
        <tissue>Oligodendroglioma</tissue>
    </source>
</reference>
<reference key="2">
    <citation type="journal article" date="2005" name="Science">
        <title>The transcriptional landscape of the mammalian genome.</title>
        <authorList>
            <person name="Carninci P."/>
            <person name="Kasukawa T."/>
            <person name="Katayama S."/>
            <person name="Gough J."/>
            <person name="Frith M.C."/>
            <person name="Maeda N."/>
            <person name="Oyama R."/>
            <person name="Ravasi T."/>
            <person name="Lenhard B."/>
            <person name="Wells C."/>
            <person name="Kodzius R."/>
            <person name="Shimokawa K."/>
            <person name="Bajic V.B."/>
            <person name="Brenner S.E."/>
            <person name="Batalov S."/>
            <person name="Forrest A.R."/>
            <person name="Zavolan M."/>
            <person name="Davis M.J."/>
            <person name="Wilming L.G."/>
            <person name="Aidinis V."/>
            <person name="Allen J.E."/>
            <person name="Ambesi-Impiombato A."/>
            <person name="Apweiler R."/>
            <person name="Aturaliya R.N."/>
            <person name="Bailey T.L."/>
            <person name="Bansal M."/>
            <person name="Baxter L."/>
            <person name="Beisel K.W."/>
            <person name="Bersano T."/>
            <person name="Bono H."/>
            <person name="Chalk A.M."/>
            <person name="Chiu K.P."/>
            <person name="Choudhary V."/>
            <person name="Christoffels A."/>
            <person name="Clutterbuck D.R."/>
            <person name="Crowe M.L."/>
            <person name="Dalla E."/>
            <person name="Dalrymple B.P."/>
            <person name="de Bono B."/>
            <person name="Della Gatta G."/>
            <person name="di Bernardo D."/>
            <person name="Down T."/>
            <person name="Engstrom P."/>
            <person name="Fagiolini M."/>
            <person name="Faulkner G."/>
            <person name="Fletcher C.F."/>
            <person name="Fukushima T."/>
            <person name="Furuno M."/>
            <person name="Futaki S."/>
            <person name="Gariboldi M."/>
            <person name="Georgii-Hemming P."/>
            <person name="Gingeras T.R."/>
            <person name="Gojobori T."/>
            <person name="Green R.E."/>
            <person name="Gustincich S."/>
            <person name="Harbers M."/>
            <person name="Hayashi Y."/>
            <person name="Hensch T.K."/>
            <person name="Hirokawa N."/>
            <person name="Hill D."/>
            <person name="Huminiecki L."/>
            <person name="Iacono M."/>
            <person name="Ikeo K."/>
            <person name="Iwama A."/>
            <person name="Ishikawa T."/>
            <person name="Jakt M."/>
            <person name="Kanapin A."/>
            <person name="Katoh M."/>
            <person name="Kawasawa Y."/>
            <person name="Kelso J."/>
            <person name="Kitamura H."/>
            <person name="Kitano H."/>
            <person name="Kollias G."/>
            <person name="Krishnan S.P."/>
            <person name="Kruger A."/>
            <person name="Kummerfeld S.K."/>
            <person name="Kurochkin I.V."/>
            <person name="Lareau L.F."/>
            <person name="Lazarevic D."/>
            <person name="Lipovich L."/>
            <person name="Liu J."/>
            <person name="Liuni S."/>
            <person name="McWilliam S."/>
            <person name="Madan Babu M."/>
            <person name="Madera M."/>
            <person name="Marchionni L."/>
            <person name="Matsuda H."/>
            <person name="Matsuzawa S."/>
            <person name="Miki H."/>
            <person name="Mignone F."/>
            <person name="Miyake S."/>
            <person name="Morris K."/>
            <person name="Mottagui-Tabar S."/>
            <person name="Mulder N."/>
            <person name="Nakano N."/>
            <person name="Nakauchi H."/>
            <person name="Ng P."/>
            <person name="Nilsson R."/>
            <person name="Nishiguchi S."/>
            <person name="Nishikawa S."/>
            <person name="Nori F."/>
            <person name="Ohara O."/>
            <person name="Okazaki Y."/>
            <person name="Orlando V."/>
            <person name="Pang K.C."/>
            <person name="Pavan W.J."/>
            <person name="Pavesi G."/>
            <person name="Pesole G."/>
            <person name="Petrovsky N."/>
            <person name="Piazza S."/>
            <person name="Reed J."/>
            <person name="Reid J.F."/>
            <person name="Ring B.Z."/>
            <person name="Ringwald M."/>
            <person name="Rost B."/>
            <person name="Ruan Y."/>
            <person name="Salzberg S.L."/>
            <person name="Sandelin A."/>
            <person name="Schneider C."/>
            <person name="Schoenbach C."/>
            <person name="Sekiguchi K."/>
            <person name="Semple C.A."/>
            <person name="Seno S."/>
            <person name="Sessa L."/>
            <person name="Sheng Y."/>
            <person name="Shibata Y."/>
            <person name="Shimada H."/>
            <person name="Shimada K."/>
            <person name="Silva D."/>
            <person name="Sinclair B."/>
            <person name="Sperling S."/>
            <person name="Stupka E."/>
            <person name="Sugiura K."/>
            <person name="Sultana R."/>
            <person name="Takenaka Y."/>
            <person name="Taki K."/>
            <person name="Tammoja K."/>
            <person name="Tan S.L."/>
            <person name="Tang S."/>
            <person name="Taylor M.S."/>
            <person name="Tegner J."/>
            <person name="Teichmann S.A."/>
            <person name="Ueda H.R."/>
            <person name="van Nimwegen E."/>
            <person name="Verardo R."/>
            <person name="Wei C.L."/>
            <person name="Yagi K."/>
            <person name="Yamanishi H."/>
            <person name="Zabarovsky E."/>
            <person name="Zhu S."/>
            <person name="Zimmer A."/>
            <person name="Hide W."/>
            <person name="Bult C."/>
            <person name="Grimmond S.M."/>
            <person name="Teasdale R.D."/>
            <person name="Liu E.T."/>
            <person name="Brusic V."/>
            <person name="Quackenbush J."/>
            <person name="Wahlestedt C."/>
            <person name="Mattick J.S."/>
            <person name="Hume D.A."/>
            <person name="Kai C."/>
            <person name="Sasaki D."/>
            <person name="Tomaru Y."/>
            <person name="Fukuda S."/>
            <person name="Kanamori-Katayama M."/>
            <person name="Suzuki M."/>
            <person name="Aoki J."/>
            <person name="Arakawa T."/>
            <person name="Iida J."/>
            <person name="Imamura K."/>
            <person name="Itoh M."/>
            <person name="Kato T."/>
            <person name="Kawaji H."/>
            <person name="Kawagashira N."/>
            <person name="Kawashima T."/>
            <person name="Kojima M."/>
            <person name="Kondo S."/>
            <person name="Konno H."/>
            <person name="Nakano K."/>
            <person name="Ninomiya N."/>
            <person name="Nishio T."/>
            <person name="Okada M."/>
            <person name="Plessy C."/>
            <person name="Shibata K."/>
            <person name="Shiraki T."/>
            <person name="Suzuki S."/>
            <person name="Tagami M."/>
            <person name="Waki K."/>
            <person name="Watahiki A."/>
            <person name="Okamura-Oho Y."/>
            <person name="Suzuki H."/>
            <person name="Kawai J."/>
            <person name="Hayashizaki Y."/>
        </authorList>
    </citation>
    <scope>NUCLEOTIDE SEQUENCE [LARGE SCALE MRNA] (ISOFORM 2)</scope>
    <source>
        <strain>C57BL/6J</strain>
        <tissue>Liver</tissue>
    </source>
</reference>
<reference key="3">
    <citation type="journal article" date="2009" name="PLoS Biol.">
        <title>Lineage-specific biology revealed by a finished genome assembly of the mouse.</title>
        <authorList>
            <person name="Church D.M."/>
            <person name="Goodstadt L."/>
            <person name="Hillier L.W."/>
            <person name="Zody M.C."/>
            <person name="Goldstein S."/>
            <person name="She X."/>
            <person name="Bult C.J."/>
            <person name="Agarwala R."/>
            <person name="Cherry J.L."/>
            <person name="DiCuccio M."/>
            <person name="Hlavina W."/>
            <person name="Kapustin Y."/>
            <person name="Meric P."/>
            <person name="Maglott D."/>
            <person name="Birtle Z."/>
            <person name="Marques A.C."/>
            <person name="Graves T."/>
            <person name="Zhou S."/>
            <person name="Teague B."/>
            <person name="Potamousis K."/>
            <person name="Churas C."/>
            <person name="Place M."/>
            <person name="Herschleb J."/>
            <person name="Runnheim R."/>
            <person name="Forrest D."/>
            <person name="Amos-Landgraf J."/>
            <person name="Schwartz D.C."/>
            <person name="Cheng Z."/>
            <person name="Lindblad-Toh K."/>
            <person name="Eichler E.E."/>
            <person name="Ponting C.P."/>
        </authorList>
    </citation>
    <scope>NUCLEOTIDE SEQUENCE [LARGE SCALE GENOMIC DNA]</scope>
    <source>
        <strain>C57BL/6J</strain>
    </source>
</reference>
<reference key="4">
    <citation type="journal article" date="2004" name="Genome Res.">
        <title>The status, quality, and expansion of the NIH full-length cDNA project: the Mammalian Gene Collection (MGC).</title>
        <authorList>
            <consortium name="The MGC Project Team"/>
        </authorList>
    </citation>
    <scope>NUCLEOTIDE SEQUENCE [LARGE SCALE MRNA] (ISOFORM 1)</scope>
    <source>
        <strain>C57BL/6J</strain>
        <strain>FVB/N</strain>
        <tissue>Brain</tissue>
        <tissue>Kidney</tissue>
    </source>
</reference>
<reference key="5">
    <citation type="journal article" date="2007" name="Proc. Natl. Acad. Sci. U.S.A.">
        <title>Large-scale phosphorylation analysis of mouse liver.</title>
        <authorList>
            <person name="Villen J."/>
            <person name="Beausoleil S.A."/>
            <person name="Gerber S.A."/>
            <person name="Gygi S.P."/>
        </authorList>
    </citation>
    <scope>IDENTIFICATION BY MASS SPECTROMETRY [LARGE SCALE ANALYSIS]</scope>
    <source>
        <tissue>Liver</tissue>
    </source>
</reference>
<reference key="6">
    <citation type="journal article" date="2010" name="Cell">
        <title>A tissue-specific atlas of mouse protein phosphorylation and expression.</title>
        <authorList>
            <person name="Huttlin E.L."/>
            <person name="Jedrychowski M.P."/>
            <person name="Elias J.E."/>
            <person name="Goswami T."/>
            <person name="Rad R."/>
            <person name="Beausoleil S.A."/>
            <person name="Villen J."/>
            <person name="Haas W."/>
            <person name="Sowa M.E."/>
            <person name="Gygi S.P."/>
        </authorList>
    </citation>
    <scope>PHOSPHORYLATION [LARGE SCALE ANALYSIS] AT SER-353; THR-357; THR-690 AND THR-695</scope>
    <scope>IDENTIFICATION BY MASS SPECTROMETRY [LARGE SCALE ANALYSIS]</scope>
    <source>
        <tissue>Brain</tissue>
        <tissue>Heart</tissue>
        <tissue>Kidney</tissue>
    </source>
</reference>
<reference key="7">
    <citation type="journal article" date="2012" name="Proc. Natl. Acad. Sci. U.S.A.">
        <title>In vivo localization and identification of SUMOylated proteins in the brain of His6-HA-SUMO1 knock-in mice.</title>
        <authorList>
            <person name="Tirard M."/>
            <person name="Hsiao H.H."/>
            <person name="Nikolov M."/>
            <person name="Urlaub H."/>
            <person name="Melchior F."/>
            <person name="Brose N."/>
        </authorList>
    </citation>
    <scope>SUMOYLATION WITH SUMO1</scope>
</reference>
<reference key="8">
    <citation type="journal article" date="2016" name="Front. Cell Dev. Biol.">
        <title>Gene expression profiling of muscle stem cells identifies novel regulators of postnatal myogenesis.</title>
        <authorList>
            <person name="Alonso-Martin S."/>
            <person name="Rochat A."/>
            <person name="Mademtzoglou D."/>
            <person name="Morais J."/>
            <person name="de Reynies A."/>
            <person name="Aurade F."/>
            <person name="Chang T.H."/>
            <person name="Zammit P.S."/>
            <person name="Relaix F."/>
        </authorList>
    </citation>
    <scope>FUNCTION</scope>
    <scope>DEVELOPMENTAL STAGE</scope>
    <scope>TISSUE SPECIFICITY</scope>
</reference>
<protein>
    <recommendedName>
        <fullName>Zinc finger and BTB domain-containing protein 20</fullName>
    </recommendedName>
    <alternativeName>
        <fullName>BTB/POZ domain zinc finger factor HOF</fullName>
    </alternativeName>
    <alternativeName>
        <fullName>Zinc finger protein 288</fullName>
    </alternativeName>
</protein>
<name>ZBT20_MOUSE</name>
<keyword id="KW-0025">Alternative splicing</keyword>
<keyword id="KW-0238">DNA-binding</keyword>
<keyword id="KW-1017">Isopeptide bond</keyword>
<keyword id="KW-0479">Metal-binding</keyword>
<keyword id="KW-0539">Nucleus</keyword>
<keyword id="KW-0597">Phosphoprotein</keyword>
<keyword id="KW-1185">Reference proteome</keyword>
<keyword id="KW-0677">Repeat</keyword>
<keyword id="KW-0804">Transcription</keyword>
<keyword id="KW-0805">Transcription regulation</keyword>
<keyword id="KW-0832">Ubl conjugation</keyword>
<keyword id="KW-0862">Zinc</keyword>
<keyword id="KW-0863">Zinc-finger</keyword>
<feature type="chain" id="PRO_0000325961" description="Zinc finger and BTB domain-containing protein 20">
    <location>
        <begin position="1"/>
        <end position="741"/>
    </location>
</feature>
<feature type="domain" description="BTB" evidence="2">
    <location>
        <begin position="104"/>
        <end position="167"/>
    </location>
</feature>
<feature type="zinc finger region" description="C2H2-type 1" evidence="3">
    <location>
        <begin position="578"/>
        <end position="600"/>
    </location>
</feature>
<feature type="zinc finger region" description="C2H2-type 2" evidence="3">
    <location>
        <begin position="606"/>
        <end position="628"/>
    </location>
</feature>
<feature type="zinc finger region" description="C2H2-type 3" evidence="3">
    <location>
        <begin position="634"/>
        <end position="656"/>
    </location>
</feature>
<feature type="zinc finger region" description="C2H2-type 4" evidence="3">
    <location>
        <begin position="662"/>
        <end position="684"/>
    </location>
</feature>
<feature type="zinc finger region" description="C2H2-type 5" evidence="3">
    <location>
        <begin position="715"/>
        <end position="737"/>
    </location>
</feature>
<feature type="region of interest" description="Disordered" evidence="4">
    <location>
        <begin position="1"/>
        <end position="28"/>
    </location>
</feature>
<feature type="region of interest" description="Disordered" evidence="4">
    <location>
        <begin position="203"/>
        <end position="235"/>
    </location>
</feature>
<feature type="region of interest" description="Disordered" evidence="4">
    <location>
        <begin position="350"/>
        <end position="440"/>
    </location>
</feature>
<feature type="compositionally biased region" description="Basic and acidic residues" evidence="4">
    <location>
        <begin position="1"/>
        <end position="17"/>
    </location>
</feature>
<feature type="compositionally biased region" description="Polar residues" evidence="4">
    <location>
        <begin position="206"/>
        <end position="235"/>
    </location>
</feature>
<feature type="compositionally biased region" description="Acidic residues" evidence="4">
    <location>
        <begin position="354"/>
        <end position="367"/>
    </location>
</feature>
<feature type="compositionally biased region" description="Low complexity" evidence="4">
    <location>
        <begin position="404"/>
        <end position="423"/>
    </location>
</feature>
<feature type="modified residue" description="Phosphothreonine" evidence="1">
    <location>
        <position position="211"/>
    </location>
</feature>
<feature type="modified residue" description="Phosphoserine" evidence="12">
    <location>
        <position position="353"/>
    </location>
</feature>
<feature type="modified residue" description="Phosphothreonine" evidence="12">
    <location>
        <position position="357"/>
    </location>
</feature>
<feature type="modified residue" description="Phosphothreonine" evidence="12">
    <location>
        <position position="690"/>
    </location>
</feature>
<feature type="modified residue" description="Phosphothreonine" evidence="12">
    <location>
        <position position="695"/>
    </location>
</feature>
<feature type="cross-link" description="Glycyl lysine isopeptide (Lys-Gly) (interchain with G-Cter in SUMO1); alternate" evidence="1">
    <location>
        <position position="330"/>
    </location>
</feature>
<feature type="cross-link" description="Glycyl lysine isopeptide (Lys-Gly) (interchain with G-Cter in SUMO2); alternate" evidence="1">
    <location>
        <position position="330"/>
    </location>
</feature>
<feature type="cross-link" description="Glycyl lysine isopeptide (Lys-Gly) (interchain with G-Cter in SUMO2)" evidence="1">
    <location>
        <position position="371"/>
    </location>
</feature>
<feature type="cross-link" description="Glycyl lysine isopeptide (Lys-Gly) (interchain with G-Cter in SUMO2)" evidence="1">
    <location>
        <position position="723"/>
    </location>
</feature>
<feature type="splice variant" id="VSP_032504" description="In isoform 2." evidence="8 9">
    <location>
        <begin position="1"/>
        <end position="73"/>
    </location>
</feature>
<feature type="sequence conflict" description="In Ref. 2; BAB23755." evidence="10" ref="2">
    <original>N</original>
    <variation>D</variation>
    <location>
        <position position="88"/>
    </location>
</feature>
<feature type="sequence conflict" description="In Ref. 1; AAF06015." evidence="10" ref="1">
    <original>A</original>
    <variation>D</variation>
    <location>
        <position position="421"/>
    </location>
</feature>
<gene>
    <name type="primary">Zbtb20</name>
    <name type="synonym">Zfp288</name>
</gene>